<protein>
    <recommendedName>
        <fullName evidence="1">Small ribosomal subunit protein bS6</fullName>
    </recommendedName>
    <alternativeName>
        <fullName evidence="2">30S ribosomal protein S6</fullName>
    </alternativeName>
</protein>
<feature type="chain" id="PRO_0000176840" description="Small ribosomal subunit protein bS6">
    <location>
        <begin position="1"/>
        <end position="98"/>
    </location>
</feature>
<name>RS6_STAAW</name>
<organism>
    <name type="scientific">Staphylococcus aureus (strain MW2)</name>
    <dbReference type="NCBI Taxonomy" id="196620"/>
    <lineage>
        <taxon>Bacteria</taxon>
        <taxon>Bacillati</taxon>
        <taxon>Bacillota</taxon>
        <taxon>Bacilli</taxon>
        <taxon>Bacillales</taxon>
        <taxon>Staphylococcaceae</taxon>
        <taxon>Staphylococcus</taxon>
    </lineage>
</organism>
<sequence length="98" mass="11595">MRTYEVMYIVRPNIEEDAKKALVERFNGILATEGAEVLEAKDWGKRRLAYEINDFKDGFYNIVRVKSDNNKATDEFQRLAKISDDIIRYMVIREDEDK</sequence>
<comment type="function">
    <text evidence="1">Binds together with bS18 to 16S ribosomal RNA.</text>
</comment>
<comment type="similarity">
    <text evidence="1">Belongs to the bacterial ribosomal protein bS6 family.</text>
</comment>
<evidence type="ECO:0000255" key="1">
    <source>
        <dbReference type="HAMAP-Rule" id="MF_00360"/>
    </source>
</evidence>
<evidence type="ECO:0000305" key="2"/>
<proteinExistence type="evidence at protein level"/>
<accession>P66596</accession>
<accession>Q99WL2</accession>
<reference key="1">
    <citation type="journal article" date="2002" name="Lancet">
        <title>Genome and virulence determinants of high virulence community-acquired MRSA.</title>
        <authorList>
            <person name="Baba T."/>
            <person name="Takeuchi F."/>
            <person name="Kuroda M."/>
            <person name="Yuzawa H."/>
            <person name="Aoki K."/>
            <person name="Oguchi A."/>
            <person name="Nagai Y."/>
            <person name="Iwama N."/>
            <person name="Asano K."/>
            <person name="Naimi T."/>
            <person name="Kuroda H."/>
            <person name="Cui L."/>
            <person name="Yamamoto K."/>
            <person name="Hiramatsu K."/>
        </authorList>
    </citation>
    <scope>NUCLEOTIDE SEQUENCE [LARGE SCALE GENOMIC DNA]</scope>
    <source>
        <strain>MW2</strain>
    </source>
</reference>
<gene>
    <name evidence="1" type="primary">rpsF</name>
    <name type="ordered locus">MW0341</name>
</gene>
<keyword id="KW-0002">3D-structure</keyword>
<keyword id="KW-0687">Ribonucleoprotein</keyword>
<keyword id="KW-0689">Ribosomal protein</keyword>
<keyword id="KW-0694">RNA-binding</keyword>
<keyword id="KW-0699">rRNA-binding</keyword>
<dbReference type="EMBL" id="BA000033">
    <property type="protein sequence ID" value="BAB94206.1"/>
    <property type="molecule type" value="Genomic_DNA"/>
</dbReference>
<dbReference type="RefSeq" id="WP_001261460.1">
    <property type="nucleotide sequence ID" value="NC_003923.1"/>
</dbReference>
<dbReference type="PDB" id="8Y38">
    <property type="method" value="EM"/>
    <property type="resolution" value="2.58 A"/>
    <property type="chains" value="f=1-98"/>
</dbReference>
<dbReference type="PDB" id="8Y39">
    <property type="method" value="EM"/>
    <property type="resolution" value="3.60 A"/>
    <property type="chains" value="f=1-98"/>
</dbReference>
<dbReference type="PDBsum" id="8Y38"/>
<dbReference type="PDBsum" id="8Y39"/>
<dbReference type="EMDB" id="EMD-38875"/>
<dbReference type="EMDB" id="EMD-38876"/>
<dbReference type="SMR" id="P66596"/>
<dbReference type="GeneID" id="98344691"/>
<dbReference type="KEGG" id="sam:MW0341"/>
<dbReference type="HOGENOM" id="CLU_113441_5_3_9"/>
<dbReference type="GO" id="GO:0005737">
    <property type="term" value="C:cytoplasm"/>
    <property type="evidence" value="ECO:0007669"/>
    <property type="project" value="UniProtKB-ARBA"/>
</dbReference>
<dbReference type="GO" id="GO:1990904">
    <property type="term" value="C:ribonucleoprotein complex"/>
    <property type="evidence" value="ECO:0007669"/>
    <property type="project" value="UniProtKB-KW"/>
</dbReference>
<dbReference type="GO" id="GO:0005840">
    <property type="term" value="C:ribosome"/>
    <property type="evidence" value="ECO:0007669"/>
    <property type="project" value="UniProtKB-KW"/>
</dbReference>
<dbReference type="GO" id="GO:0070181">
    <property type="term" value="F:small ribosomal subunit rRNA binding"/>
    <property type="evidence" value="ECO:0007669"/>
    <property type="project" value="TreeGrafter"/>
</dbReference>
<dbReference type="GO" id="GO:0003735">
    <property type="term" value="F:structural constituent of ribosome"/>
    <property type="evidence" value="ECO:0007669"/>
    <property type="project" value="InterPro"/>
</dbReference>
<dbReference type="GO" id="GO:0006412">
    <property type="term" value="P:translation"/>
    <property type="evidence" value="ECO:0007669"/>
    <property type="project" value="UniProtKB-UniRule"/>
</dbReference>
<dbReference type="CDD" id="cd00473">
    <property type="entry name" value="bS6"/>
    <property type="match status" value="1"/>
</dbReference>
<dbReference type="FunFam" id="3.30.70.60:FF:000002">
    <property type="entry name" value="30S ribosomal protein S6"/>
    <property type="match status" value="1"/>
</dbReference>
<dbReference type="Gene3D" id="3.30.70.60">
    <property type="match status" value="1"/>
</dbReference>
<dbReference type="HAMAP" id="MF_00360">
    <property type="entry name" value="Ribosomal_bS6"/>
    <property type="match status" value="1"/>
</dbReference>
<dbReference type="InterPro" id="IPR000529">
    <property type="entry name" value="Ribosomal_bS6"/>
</dbReference>
<dbReference type="InterPro" id="IPR020815">
    <property type="entry name" value="Ribosomal_bS6_CS"/>
</dbReference>
<dbReference type="InterPro" id="IPR035980">
    <property type="entry name" value="Ribosomal_bS6_sf"/>
</dbReference>
<dbReference type="InterPro" id="IPR020814">
    <property type="entry name" value="Ribosomal_S6_plastid/chlpt"/>
</dbReference>
<dbReference type="InterPro" id="IPR014717">
    <property type="entry name" value="Transl_elong_EF1B/ribsomal_bS6"/>
</dbReference>
<dbReference type="NCBIfam" id="TIGR00166">
    <property type="entry name" value="S6"/>
    <property type="match status" value="1"/>
</dbReference>
<dbReference type="PANTHER" id="PTHR21011">
    <property type="entry name" value="MITOCHONDRIAL 28S RIBOSOMAL PROTEIN S6"/>
    <property type="match status" value="1"/>
</dbReference>
<dbReference type="PANTHER" id="PTHR21011:SF1">
    <property type="entry name" value="SMALL RIBOSOMAL SUBUNIT PROTEIN BS6M"/>
    <property type="match status" value="1"/>
</dbReference>
<dbReference type="Pfam" id="PF01250">
    <property type="entry name" value="Ribosomal_S6"/>
    <property type="match status" value="1"/>
</dbReference>
<dbReference type="SUPFAM" id="SSF54995">
    <property type="entry name" value="Ribosomal protein S6"/>
    <property type="match status" value="1"/>
</dbReference>
<dbReference type="PROSITE" id="PS01048">
    <property type="entry name" value="RIBOSOMAL_S6"/>
    <property type="match status" value="1"/>
</dbReference>